<evidence type="ECO:0000255" key="1">
    <source>
        <dbReference type="HAMAP-Rule" id="MF_00367"/>
    </source>
</evidence>
<evidence type="ECO:0000255" key="2">
    <source>
        <dbReference type="PROSITE-ProRule" id="PRU01050"/>
    </source>
</evidence>
<protein>
    <recommendedName>
        <fullName evidence="1">GTPase Era</fullName>
    </recommendedName>
</protein>
<keyword id="KW-1003">Cell membrane</keyword>
<keyword id="KW-0963">Cytoplasm</keyword>
<keyword id="KW-0342">GTP-binding</keyword>
<keyword id="KW-0472">Membrane</keyword>
<keyword id="KW-0547">Nucleotide-binding</keyword>
<keyword id="KW-0690">Ribosome biogenesis</keyword>
<keyword id="KW-0694">RNA-binding</keyword>
<keyword id="KW-0699">rRNA-binding</keyword>
<proteinExistence type="inferred from homology"/>
<sequence length="301" mass="34523">MSEPFKSGFVAIVGRPNVGKSTLLNHIIGQKIAIMSDKAQTTRNKVQGVYTTDESQIIFIDTPGIHKPKHKLGDFMVKIALNTFQEVDLIYFVIDASTGFGRGDEFIIEKLKNVQTPVFLLINKIDLIAPEDLFKLIEQYRDLMEFDEIIPISALQGNNVPNLLEQTNANLEIGPMYYPKDQITDHPERFIISELIREQVLQLTREEVPHSVAVVIEGIEKNPKTEKLTINATIIVERSTQKGIIIGKQGQMLKQIGMRARKEIERLLGSKVFLEVWVKVQKNWRDKEHYLQDYGFDREEY</sequence>
<comment type="function">
    <text evidence="1">An essential GTPase that binds both GDP and GTP, with rapid nucleotide exchange. Plays a role in 16S rRNA processing and 30S ribosomal subunit biogenesis and possibly also in cell cycle regulation and energy metabolism.</text>
</comment>
<comment type="subunit">
    <text evidence="1">Monomer.</text>
</comment>
<comment type="subcellular location">
    <subcellularLocation>
        <location>Cytoplasm</location>
    </subcellularLocation>
    <subcellularLocation>
        <location evidence="1">Cell membrane</location>
        <topology evidence="1">Peripheral membrane protein</topology>
    </subcellularLocation>
</comment>
<comment type="similarity">
    <text evidence="1 2">Belongs to the TRAFAC class TrmE-Era-EngA-EngB-Septin-like GTPase superfamily. Era GTPase family.</text>
</comment>
<accession>B8DE49</accession>
<dbReference type="EMBL" id="CP001175">
    <property type="protein sequence ID" value="ACK39456.1"/>
    <property type="molecule type" value="Genomic_DNA"/>
</dbReference>
<dbReference type="RefSeq" id="WP_003730436.1">
    <property type="nucleotide sequence ID" value="NC_011660.1"/>
</dbReference>
<dbReference type="SMR" id="B8DE49"/>
<dbReference type="KEGG" id="lmh:LMHCC_1108"/>
<dbReference type="HOGENOM" id="CLU_038009_1_0_9"/>
<dbReference type="GO" id="GO:0005829">
    <property type="term" value="C:cytosol"/>
    <property type="evidence" value="ECO:0007669"/>
    <property type="project" value="TreeGrafter"/>
</dbReference>
<dbReference type="GO" id="GO:0005886">
    <property type="term" value="C:plasma membrane"/>
    <property type="evidence" value="ECO:0007669"/>
    <property type="project" value="UniProtKB-SubCell"/>
</dbReference>
<dbReference type="GO" id="GO:0005525">
    <property type="term" value="F:GTP binding"/>
    <property type="evidence" value="ECO:0007669"/>
    <property type="project" value="UniProtKB-UniRule"/>
</dbReference>
<dbReference type="GO" id="GO:0003924">
    <property type="term" value="F:GTPase activity"/>
    <property type="evidence" value="ECO:0007669"/>
    <property type="project" value="UniProtKB-UniRule"/>
</dbReference>
<dbReference type="GO" id="GO:0043024">
    <property type="term" value="F:ribosomal small subunit binding"/>
    <property type="evidence" value="ECO:0007669"/>
    <property type="project" value="TreeGrafter"/>
</dbReference>
<dbReference type="GO" id="GO:0070181">
    <property type="term" value="F:small ribosomal subunit rRNA binding"/>
    <property type="evidence" value="ECO:0007669"/>
    <property type="project" value="UniProtKB-UniRule"/>
</dbReference>
<dbReference type="GO" id="GO:0000028">
    <property type="term" value="P:ribosomal small subunit assembly"/>
    <property type="evidence" value="ECO:0007669"/>
    <property type="project" value="TreeGrafter"/>
</dbReference>
<dbReference type="CDD" id="cd04163">
    <property type="entry name" value="Era"/>
    <property type="match status" value="1"/>
</dbReference>
<dbReference type="CDD" id="cd22534">
    <property type="entry name" value="KH-II_Era"/>
    <property type="match status" value="1"/>
</dbReference>
<dbReference type="FunFam" id="3.30.300.20:FF:000003">
    <property type="entry name" value="GTPase Era"/>
    <property type="match status" value="1"/>
</dbReference>
<dbReference type="FunFam" id="3.40.50.300:FF:000094">
    <property type="entry name" value="GTPase Era"/>
    <property type="match status" value="1"/>
</dbReference>
<dbReference type="Gene3D" id="3.30.300.20">
    <property type="match status" value="1"/>
</dbReference>
<dbReference type="Gene3D" id="3.40.50.300">
    <property type="entry name" value="P-loop containing nucleotide triphosphate hydrolases"/>
    <property type="match status" value="1"/>
</dbReference>
<dbReference type="HAMAP" id="MF_00367">
    <property type="entry name" value="GTPase_Era"/>
    <property type="match status" value="1"/>
</dbReference>
<dbReference type="InterPro" id="IPR030388">
    <property type="entry name" value="G_ERA_dom"/>
</dbReference>
<dbReference type="InterPro" id="IPR006073">
    <property type="entry name" value="GTP-bd"/>
</dbReference>
<dbReference type="InterPro" id="IPR005662">
    <property type="entry name" value="GTPase_Era-like"/>
</dbReference>
<dbReference type="InterPro" id="IPR015946">
    <property type="entry name" value="KH_dom-like_a/b"/>
</dbReference>
<dbReference type="InterPro" id="IPR004044">
    <property type="entry name" value="KH_dom_type_2"/>
</dbReference>
<dbReference type="InterPro" id="IPR009019">
    <property type="entry name" value="KH_sf_prok-type"/>
</dbReference>
<dbReference type="InterPro" id="IPR027417">
    <property type="entry name" value="P-loop_NTPase"/>
</dbReference>
<dbReference type="InterPro" id="IPR005225">
    <property type="entry name" value="Small_GTP-bd"/>
</dbReference>
<dbReference type="NCBIfam" id="TIGR00436">
    <property type="entry name" value="era"/>
    <property type="match status" value="1"/>
</dbReference>
<dbReference type="NCBIfam" id="NF000908">
    <property type="entry name" value="PRK00089.1"/>
    <property type="match status" value="1"/>
</dbReference>
<dbReference type="NCBIfam" id="TIGR00231">
    <property type="entry name" value="small_GTP"/>
    <property type="match status" value="1"/>
</dbReference>
<dbReference type="PANTHER" id="PTHR42698">
    <property type="entry name" value="GTPASE ERA"/>
    <property type="match status" value="1"/>
</dbReference>
<dbReference type="PANTHER" id="PTHR42698:SF1">
    <property type="entry name" value="GTPASE ERA, MITOCHONDRIAL"/>
    <property type="match status" value="1"/>
</dbReference>
<dbReference type="Pfam" id="PF07650">
    <property type="entry name" value="KH_2"/>
    <property type="match status" value="1"/>
</dbReference>
<dbReference type="Pfam" id="PF01926">
    <property type="entry name" value="MMR_HSR1"/>
    <property type="match status" value="1"/>
</dbReference>
<dbReference type="PRINTS" id="PR00326">
    <property type="entry name" value="GTP1OBG"/>
</dbReference>
<dbReference type="SUPFAM" id="SSF52540">
    <property type="entry name" value="P-loop containing nucleoside triphosphate hydrolases"/>
    <property type="match status" value="1"/>
</dbReference>
<dbReference type="SUPFAM" id="SSF54814">
    <property type="entry name" value="Prokaryotic type KH domain (KH-domain type II)"/>
    <property type="match status" value="1"/>
</dbReference>
<dbReference type="PROSITE" id="PS51713">
    <property type="entry name" value="G_ERA"/>
    <property type="match status" value="1"/>
</dbReference>
<dbReference type="PROSITE" id="PS50823">
    <property type="entry name" value="KH_TYPE_2"/>
    <property type="match status" value="1"/>
</dbReference>
<gene>
    <name evidence="1" type="primary">era</name>
    <name type="ordered locus">LMHCC_1108</name>
</gene>
<organism>
    <name type="scientific">Listeria monocytogenes serotype 4a (strain HCC23)</name>
    <dbReference type="NCBI Taxonomy" id="552536"/>
    <lineage>
        <taxon>Bacteria</taxon>
        <taxon>Bacillati</taxon>
        <taxon>Bacillota</taxon>
        <taxon>Bacilli</taxon>
        <taxon>Bacillales</taxon>
        <taxon>Listeriaceae</taxon>
        <taxon>Listeria</taxon>
    </lineage>
</organism>
<feature type="chain" id="PRO_1000189966" description="GTPase Era">
    <location>
        <begin position="1"/>
        <end position="301"/>
    </location>
</feature>
<feature type="domain" description="Era-type G" evidence="2">
    <location>
        <begin position="6"/>
        <end position="173"/>
    </location>
</feature>
<feature type="domain" description="KH type-2" evidence="1">
    <location>
        <begin position="204"/>
        <end position="282"/>
    </location>
</feature>
<feature type="region of interest" description="G1" evidence="2">
    <location>
        <begin position="14"/>
        <end position="21"/>
    </location>
</feature>
<feature type="region of interest" description="G2" evidence="2">
    <location>
        <begin position="40"/>
        <end position="44"/>
    </location>
</feature>
<feature type="region of interest" description="G3" evidence="2">
    <location>
        <begin position="61"/>
        <end position="64"/>
    </location>
</feature>
<feature type="region of interest" description="G4" evidence="2">
    <location>
        <begin position="123"/>
        <end position="126"/>
    </location>
</feature>
<feature type="region of interest" description="G5" evidence="2">
    <location>
        <begin position="152"/>
        <end position="154"/>
    </location>
</feature>
<feature type="binding site" evidence="1">
    <location>
        <begin position="14"/>
        <end position="21"/>
    </location>
    <ligand>
        <name>GTP</name>
        <dbReference type="ChEBI" id="CHEBI:37565"/>
    </ligand>
</feature>
<feature type="binding site" evidence="1">
    <location>
        <begin position="61"/>
        <end position="65"/>
    </location>
    <ligand>
        <name>GTP</name>
        <dbReference type="ChEBI" id="CHEBI:37565"/>
    </ligand>
</feature>
<feature type="binding site" evidence="1">
    <location>
        <begin position="123"/>
        <end position="126"/>
    </location>
    <ligand>
        <name>GTP</name>
        <dbReference type="ChEBI" id="CHEBI:37565"/>
    </ligand>
</feature>
<name>ERA_LISMH</name>
<reference key="1">
    <citation type="journal article" date="2011" name="J. Bacteriol.">
        <title>Genome sequence of lineage III Listeria monocytogenes strain HCC23.</title>
        <authorList>
            <person name="Steele C.L."/>
            <person name="Donaldson J.R."/>
            <person name="Paul D."/>
            <person name="Banes M.M."/>
            <person name="Arick T."/>
            <person name="Bridges S.M."/>
            <person name="Lawrence M.L."/>
        </authorList>
    </citation>
    <scope>NUCLEOTIDE SEQUENCE [LARGE SCALE GENOMIC DNA]</scope>
    <source>
        <strain>HCC23</strain>
    </source>
</reference>